<protein>
    <recommendedName>
        <fullName evidence="1">Methionyl-tRNA formyltransferase</fullName>
        <ecNumber evidence="1">2.1.2.9</ecNumber>
    </recommendedName>
</protein>
<sequence>MRIVFMGTPEFAVPSLRSIAAEHNHFELVLVVTGSDKPRRGRNAPSEPSPVKSAALELGFQVYETDDVSSSDFLSVVADSAPDVIVVAAFRILPPEVYGQAKLGAFNLHASLLPAYRGAAPINWAIINGEKESGVTTFFLQKTVDTGNVIMQEKIPVLPDDNASILSVKLSHLGAELVVKTLRSIQAGTVEVQAQDDAFFSRAPKLTRENTRIRWNQPVAVLSDFIRGLAMKPAAWTTVQNRTMKIFRAIPFTEEITSSIEQPGSILVERGRFLVRGSDGWLEVKQLQPEGRKPMEGAEFARGFRPESGTSLLFE</sequence>
<keyword id="KW-0648">Protein biosynthesis</keyword>
<keyword id="KW-1185">Reference proteome</keyword>
<keyword id="KW-0808">Transferase</keyword>
<dbReference type="EC" id="2.1.2.9" evidence="1"/>
<dbReference type="EMBL" id="CP000492">
    <property type="protein sequence ID" value="ABL65876.1"/>
    <property type="molecule type" value="Genomic_DNA"/>
</dbReference>
<dbReference type="RefSeq" id="WP_011745683.1">
    <property type="nucleotide sequence ID" value="NC_008639.1"/>
</dbReference>
<dbReference type="SMR" id="A1BHJ9"/>
<dbReference type="STRING" id="290317.Cpha266_1860"/>
<dbReference type="KEGG" id="cph:Cpha266_1860"/>
<dbReference type="eggNOG" id="COG0223">
    <property type="taxonomic scope" value="Bacteria"/>
</dbReference>
<dbReference type="HOGENOM" id="CLU_033347_1_1_10"/>
<dbReference type="OrthoDB" id="9802815at2"/>
<dbReference type="Proteomes" id="UP000008701">
    <property type="component" value="Chromosome"/>
</dbReference>
<dbReference type="GO" id="GO:0005829">
    <property type="term" value="C:cytosol"/>
    <property type="evidence" value="ECO:0007669"/>
    <property type="project" value="TreeGrafter"/>
</dbReference>
<dbReference type="GO" id="GO:0004479">
    <property type="term" value="F:methionyl-tRNA formyltransferase activity"/>
    <property type="evidence" value="ECO:0007669"/>
    <property type="project" value="UniProtKB-UniRule"/>
</dbReference>
<dbReference type="CDD" id="cd08646">
    <property type="entry name" value="FMT_core_Met-tRNA-FMT_N"/>
    <property type="match status" value="1"/>
</dbReference>
<dbReference type="CDD" id="cd08704">
    <property type="entry name" value="Met_tRNA_FMT_C"/>
    <property type="match status" value="1"/>
</dbReference>
<dbReference type="Gene3D" id="3.40.50.12230">
    <property type="match status" value="1"/>
</dbReference>
<dbReference type="HAMAP" id="MF_00182">
    <property type="entry name" value="Formyl_trans"/>
    <property type="match status" value="1"/>
</dbReference>
<dbReference type="InterPro" id="IPR005794">
    <property type="entry name" value="Fmt"/>
</dbReference>
<dbReference type="InterPro" id="IPR005793">
    <property type="entry name" value="Formyl_trans_C"/>
</dbReference>
<dbReference type="InterPro" id="IPR002376">
    <property type="entry name" value="Formyl_transf_N"/>
</dbReference>
<dbReference type="InterPro" id="IPR036477">
    <property type="entry name" value="Formyl_transf_N_sf"/>
</dbReference>
<dbReference type="InterPro" id="IPR011034">
    <property type="entry name" value="Formyl_transferase-like_C_sf"/>
</dbReference>
<dbReference type="InterPro" id="IPR044135">
    <property type="entry name" value="Met-tRNA-FMT_C"/>
</dbReference>
<dbReference type="InterPro" id="IPR041711">
    <property type="entry name" value="Met-tRNA-FMT_N"/>
</dbReference>
<dbReference type="NCBIfam" id="TIGR00460">
    <property type="entry name" value="fmt"/>
    <property type="match status" value="1"/>
</dbReference>
<dbReference type="PANTHER" id="PTHR11138">
    <property type="entry name" value="METHIONYL-TRNA FORMYLTRANSFERASE"/>
    <property type="match status" value="1"/>
</dbReference>
<dbReference type="PANTHER" id="PTHR11138:SF5">
    <property type="entry name" value="METHIONYL-TRNA FORMYLTRANSFERASE, MITOCHONDRIAL"/>
    <property type="match status" value="1"/>
</dbReference>
<dbReference type="Pfam" id="PF02911">
    <property type="entry name" value="Formyl_trans_C"/>
    <property type="match status" value="1"/>
</dbReference>
<dbReference type="Pfam" id="PF00551">
    <property type="entry name" value="Formyl_trans_N"/>
    <property type="match status" value="1"/>
</dbReference>
<dbReference type="SUPFAM" id="SSF50486">
    <property type="entry name" value="FMT C-terminal domain-like"/>
    <property type="match status" value="1"/>
</dbReference>
<dbReference type="SUPFAM" id="SSF53328">
    <property type="entry name" value="Formyltransferase"/>
    <property type="match status" value="1"/>
</dbReference>
<feature type="chain" id="PRO_1000058398" description="Methionyl-tRNA formyltransferase">
    <location>
        <begin position="1"/>
        <end position="315"/>
    </location>
</feature>
<feature type="binding site" evidence="1">
    <location>
        <begin position="111"/>
        <end position="114"/>
    </location>
    <ligand>
        <name>(6S)-5,6,7,8-tetrahydrofolate</name>
        <dbReference type="ChEBI" id="CHEBI:57453"/>
    </ligand>
</feature>
<reference key="1">
    <citation type="submission" date="2006-12" db="EMBL/GenBank/DDBJ databases">
        <title>Complete sequence of Chlorobium phaeobacteroides DSM 266.</title>
        <authorList>
            <consortium name="US DOE Joint Genome Institute"/>
            <person name="Copeland A."/>
            <person name="Lucas S."/>
            <person name="Lapidus A."/>
            <person name="Barry K."/>
            <person name="Detter J.C."/>
            <person name="Glavina del Rio T."/>
            <person name="Hammon N."/>
            <person name="Israni S."/>
            <person name="Pitluck S."/>
            <person name="Goltsman E."/>
            <person name="Schmutz J."/>
            <person name="Larimer F."/>
            <person name="Land M."/>
            <person name="Hauser L."/>
            <person name="Mikhailova N."/>
            <person name="Li T."/>
            <person name="Overmann J."/>
            <person name="Bryant D.A."/>
            <person name="Richardson P."/>
        </authorList>
    </citation>
    <scope>NUCLEOTIDE SEQUENCE [LARGE SCALE GENOMIC DNA]</scope>
    <source>
        <strain>DSM 266 / SMG 266 / 2430</strain>
    </source>
</reference>
<organism>
    <name type="scientific">Chlorobium phaeobacteroides (strain DSM 266 / SMG 266 / 2430)</name>
    <dbReference type="NCBI Taxonomy" id="290317"/>
    <lineage>
        <taxon>Bacteria</taxon>
        <taxon>Pseudomonadati</taxon>
        <taxon>Chlorobiota</taxon>
        <taxon>Chlorobiia</taxon>
        <taxon>Chlorobiales</taxon>
        <taxon>Chlorobiaceae</taxon>
        <taxon>Chlorobium/Pelodictyon group</taxon>
        <taxon>Chlorobium</taxon>
    </lineage>
</organism>
<proteinExistence type="inferred from homology"/>
<gene>
    <name evidence="1" type="primary">fmt</name>
    <name type="ordered locus">Cpha266_1860</name>
</gene>
<comment type="function">
    <text evidence="1">Attaches a formyl group to the free amino group of methionyl-tRNA(fMet). The formyl group appears to play a dual role in the initiator identity of N-formylmethionyl-tRNA by promoting its recognition by IF2 and preventing the misappropriation of this tRNA by the elongation apparatus.</text>
</comment>
<comment type="catalytic activity">
    <reaction evidence="1">
        <text>L-methionyl-tRNA(fMet) + (6R)-10-formyltetrahydrofolate = N-formyl-L-methionyl-tRNA(fMet) + (6S)-5,6,7,8-tetrahydrofolate + H(+)</text>
        <dbReference type="Rhea" id="RHEA:24380"/>
        <dbReference type="Rhea" id="RHEA-COMP:9952"/>
        <dbReference type="Rhea" id="RHEA-COMP:9953"/>
        <dbReference type="ChEBI" id="CHEBI:15378"/>
        <dbReference type="ChEBI" id="CHEBI:57453"/>
        <dbReference type="ChEBI" id="CHEBI:78530"/>
        <dbReference type="ChEBI" id="CHEBI:78844"/>
        <dbReference type="ChEBI" id="CHEBI:195366"/>
        <dbReference type="EC" id="2.1.2.9"/>
    </reaction>
</comment>
<comment type="similarity">
    <text evidence="1">Belongs to the Fmt family.</text>
</comment>
<name>FMT_CHLPD</name>
<accession>A1BHJ9</accession>
<evidence type="ECO:0000255" key="1">
    <source>
        <dbReference type="HAMAP-Rule" id="MF_00182"/>
    </source>
</evidence>